<feature type="chain" id="PRO_1000120231" description="GMP synthase [glutamine-hydrolyzing]">
    <location>
        <begin position="1"/>
        <end position="539"/>
    </location>
</feature>
<feature type="domain" description="Glutamine amidotransferase type-1" evidence="1">
    <location>
        <begin position="4"/>
        <end position="202"/>
    </location>
</feature>
<feature type="domain" description="GMPS ATP-PPase" evidence="1">
    <location>
        <begin position="203"/>
        <end position="395"/>
    </location>
</feature>
<feature type="active site" description="Nucleophile" evidence="1">
    <location>
        <position position="81"/>
    </location>
</feature>
<feature type="active site" evidence="1">
    <location>
        <position position="176"/>
    </location>
</feature>
<feature type="active site" evidence="1">
    <location>
        <position position="178"/>
    </location>
</feature>
<feature type="binding site" evidence="1">
    <location>
        <begin position="230"/>
        <end position="236"/>
    </location>
    <ligand>
        <name>ATP</name>
        <dbReference type="ChEBI" id="CHEBI:30616"/>
    </ligand>
</feature>
<comment type="function">
    <text evidence="1">Catalyzes the synthesis of GMP from XMP.</text>
</comment>
<comment type="catalytic activity">
    <reaction evidence="1">
        <text>XMP + L-glutamine + ATP + H2O = GMP + L-glutamate + AMP + diphosphate + 2 H(+)</text>
        <dbReference type="Rhea" id="RHEA:11680"/>
        <dbReference type="ChEBI" id="CHEBI:15377"/>
        <dbReference type="ChEBI" id="CHEBI:15378"/>
        <dbReference type="ChEBI" id="CHEBI:29985"/>
        <dbReference type="ChEBI" id="CHEBI:30616"/>
        <dbReference type="ChEBI" id="CHEBI:33019"/>
        <dbReference type="ChEBI" id="CHEBI:57464"/>
        <dbReference type="ChEBI" id="CHEBI:58115"/>
        <dbReference type="ChEBI" id="CHEBI:58359"/>
        <dbReference type="ChEBI" id="CHEBI:456215"/>
        <dbReference type="EC" id="6.3.5.2"/>
    </reaction>
</comment>
<comment type="pathway">
    <text evidence="1">Purine metabolism; GMP biosynthesis; GMP from XMP (L-Gln route): step 1/1.</text>
</comment>
<comment type="subunit">
    <text evidence="1">Homodimer.</text>
</comment>
<reference key="1">
    <citation type="submission" date="2008-02" db="EMBL/GenBank/DDBJ databases">
        <title>Complete sequence of chromosome 1 of Burkholderia cenocepacia MC0-3.</title>
        <authorList>
            <person name="Copeland A."/>
            <person name="Lucas S."/>
            <person name="Lapidus A."/>
            <person name="Barry K."/>
            <person name="Bruce D."/>
            <person name="Goodwin L."/>
            <person name="Glavina del Rio T."/>
            <person name="Dalin E."/>
            <person name="Tice H."/>
            <person name="Pitluck S."/>
            <person name="Chain P."/>
            <person name="Malfatti S."/>
            <person name="Shin M."/>
            <person name="Vergez L."/>
            <person name="Schmutz J."/>
            <person name="Larimer F."/>
            <person name="Land M."/>
            <person name="Hauser L."/>
            <person name="Kyrpides N."/>
            <person name="Mikhailova N."/>
            <person name="Tiedje J."/>
            <person name="Richardson P."/>
        </authorList>
    </citation>
    <scope>NUCLEOTIDE SEQUENCE [LARGE SCALE GENOMIC DNA]</scope>
    <source>
        <strain>MC0-3</strain>
    </source>
</reference>
<proteinExistence type="inferred from homology"/>
<organism>
    <name type="scientific">Burkholderia orbicola (strain MC0-3)</name>
    <dbReference type="NCBI Taxonomy" id="406425"/>
    <lineage>
        <taxon>Bacteria</taxon>
        <taxon>Pseudomonadati</taxon>
        <taxon>Pseudomonadota</taxon>
        <taxon>Betaproteobacteria</taxon>
        <taxon>Burkholderiales</taxon>
        <taxon>Burkholderiaceae</taxon>
        <taxon>Burkholderia</taxon>
        <taxon>Burkholderia cepacia complex</taxon>
        <taxon>Burkholderia orbicola</taxon>
    </lineage>
</organism>
<name>GUAA_BURO0</name>
<sequence length="539" mass="59390">MHDKILILDFGSQVTQLIARRVREAHVYCEIHPNDVSDDFVREFAPKAVILSGSHASTYEDHQLRAPQAVWDLGVPVLGICYGMQTMAVQLGGKVEWSDHREFGYAEMRAHGHTRLLDGIEDFTTAEGHGMLKVWMSHGDKVAELPPGFALMASTPSCPIAGMADEARGYYAVQFHPEVTHTVKGRQIIERFVLQIAGAKPDWIMKNHIEEAVAKIREQVGDEEVILGLSGGVDSSVAAALIHRAIGDQLTCVFVDHGLLRLNEGKMVLDMFEGRLHAKVVHVDASDQFLGHLAGVTDPEAKRKIIGREFVEVFQAEAKKLSKAKWLAQGTIYPDVVESGGTKTKKATTIKSHHNVGGLPETLGLKLLEPLRDLFKDEVRELGVALGLPPEMVYRHPFPGPGLGVRILGEVKREYAELLRRADAIFIEELRNTTATAQDAAAGLCGEADVGKSWYDLTSQAFAVFLPVKSVGVMGDGRTYDYVTSLRAVQTTDFMTAHWAHLPYALLGRASNRIINEVRGINRVVYDISGKPPATIEWE</sequence>
<gene>
    <name evidence="1" type="primary">guaA</name>
    <name type="ordered locus">Bcenmc03_2009</name>
</gene>
<protein>
    <recommendedName>
        <fullName evidence="1">GMP synthase [glutamine-hydrolyzing]</fullName>
        <ecNumber evidence="1">6.3.5.2</ecNumber>
    </recommendedName>
    <alternativeName>
        <fullName evidence="1">GMP synthetase</fullName>
    </alternativeName>
    <alternativeName>
        <fullName evidence="1">Glutamine amidotransferase</fullName>
    </alternativeName>
</protein>
<evidence type="ECO:0000255" key="1">
    <source>
        <dbReference type="HAMAP-Rule" id="MF_00344"/>
    </source>
</evidence>
<keyword id="KW-0067">ATP-binding</keyword>
<keyword id="KW-0315">Glutamine amidotransferase</keyword>
<keyword id="KW-0332">GMP biosynthesis</keyword>
<keyword id="KW-0436">Ligase</keyword>
<keyword id="KW-0547">Nucleotide-binding</keyword>
<keyword id="KW-0658">Purine biosynthesis</keyword>
<dbReference type="EC" id="6.3.5.2" evidence="1"/>
<dbReference type="EMBL" id="CP000958">
    <property type="protein sequence ID" value="ACA91170.1"/>
    <property type="molecule type" value="Genomic_DNA"/>
</dbReference>
<dbReference type="RefSeq" id="WP_011549558.1">
    <property type="nucleotide sequence ID" value="NC_010508.1"/>
</dbReference>
<dbReference type="SMR" id="B1JUC0"/>
<dbReference type="MEROPS" id="C26.957"/>
<dbReference type="GeneID" id="83048786"/>
<dbReference type="KEGG" id="bcm:Bcenmc03_2009"/>
<dbReference type="HOGENOM" id="CLU_014340_0_5_4"/>
<dbReference type="UniPathway" id="UPA00189">
    <property type="reaction ID" value="UER00296"/>
</dbReference>
<dbReference type="Proteomes" id="UP000002169">
    <property type="component" value="Chromosome 1"/>
</dbReference>
<dbReference type="GO" id="GO:0005829">
    <property type="term" value="C:cytosol"/>
    <property type="evidence" value="ECO:0007669"/>
    <property type="project" value="TreeGrafter"/>
</dbReference>
<dbReference type="GO" id="GO:0005524">
    <property type="term" value="F:ATP binding"/>
    <property type="evidence" value="ECO:0007669"/>
    <property type="project" value="UniProtKB-UniRule"/>
</dbReference>
<dbReference type="GO" id="GO:0003921">
    <property type="term" value="F:GMP synthase activity"/>
    <property type="evidence" value="ECO:0007669"/>
    <property type="project" value="InterPro"/>
</dbReference>
<dbReference type="CDD" id="cd01742">
    <property type="entry name" value="GATase1_GMP_Synthase"/>
    <property type="match status" value="1"/>
</dbReference>
<dbReference type="CDD" id="cd01997">
    <property type="entry name" value="GMP_synthase_C"/>
    <property type="match status" value="1"/>
</dbReference>
<dbReference type="FunFam" id="3.30.300.10:FF:000002">
    <property type="entry name" value="GMP synthase [glutamine-hydrolyzing]"/>
    <property type="match status" value="1"/>
</dbReference>
<dbReference type="FunFam" id="3.40.50.620:FF:000001">
    <property type="entry name" value="GMP synthase [glutamine-hydrolyzing]"/>
    <property type="match status" value="1"/>
</dbReference>
<dbReference type="FunFam" id="3.40.50.880:FF:000001">
    <property type="entry name" value="GMP synthase [glutamine-hydrolyzing]"/>
    <property type="match status" value="1"/>
</dbReference>
<dbReference type="Gene3D" id="3.30.300.10">
    <property type="match status" value="1"/>
</dbReference>
<dbReference type="Gene3D" id="3.40.50.880">
    <property type="match status" value="1"/>
</dbReference>
<dbReference type="Gene3D" id="3.40.50.620">
    <property type="entry name" value="HUPs"/>
    <property type="match status" value="1"/>
</dbReference>
<dbReference type="HAMAP" id="MF_00344">
    <property type="entry name" value="GMP_synthase"/>
    <property type="match status" value="1"/>
</dbReference>
<dbReference type="InterPro" id="IPR029062">
    <property type="entry name" value="Class_I_gatase-like"/>
</dbReference>
<dbReference type="InterPro" id="IPR017926">
    <property type="entry name" value="GATASE"/>
</dbReference>
<dbReference type="InterPro" id="IPR001674">
    <property type="entry name" value="GMP_synth_C"/>
</dbReference>
<dbReference type="InterPro" id="IPR004739">
    <property type="entry name" value="GMP_synth_GATase"/>
</dbReference>
<dbReference type="InterPro" id="IPR022955">
    <property type="entry name" value="GMP_synthase"/>
</dbReference>
<dbReference type="InterPro" id="IPR025777">
    <property type="entry name" value="GMPS_ATP_PPase_dom"/>
</dbReference>
<dbReference type="InterPro" id="IPR022310">
    <property type="entry name" value="NAD/GMP_synthase"/>
</dbReference>
<dbReference type="InterPro" id="IPR014729">
    <property type="entry name" value="Rossmann-like_a/b/a_fold"/>
</dbReference>
<dbReference type="NCBIfam" id="TIGR00884">
    <property type="entry name" value="guaA_Cterm"/>
    <property type="match status" value="1"/>
</dbReference>
<dbReference type="NCBIfam" id="TIGR00888">
    <property type="entry name" value="guaA_Nterm"/>
    <property type="match status" value="1"/>
</dbReference>
<dbReference type="NCBIfam" id="NF000848">
    <property type="entry name" value="PRK00074.1"/>
    <property type="match status" value="1"/>
</dbReference>
<dbReference type="PANTHER" id="PTHR11922:SF2">
    <property type="entry name" value="GMP SYNTHASE [GLUTAMINE-HYDROLYZING]"/>
    <property type="match status" value="1"/>
</dbReference>
<dbReference type="PANTHER" id="PTHR11922">
    <property type="entry name" value="GMP SYNTHASE-RELATED"/>
    <property type="match status" value="1"/>
</dbReference>
<dbReference type="Pfam" id="PF00117">
    <property type="entry name" value="GATase"/>
    <property type="match status" value="1"/>
</dbReference>
<dbReference type="Pfam" id="PF00958">
    <property type="entry name" value="GMP_synt_C"/>
    <property type="match status" value="1"/>
</dbReference>
<dbReference type="Pfam" id="PF02540">
    <property type="entry name" value="NAD_synthase"/>
    <property type="match status" value="1"/>
</dbReference>
<dbReference type="SUPFAM" id="SSF52402">
    <property type="entry name" value="Adenine nucleotide alpha hydrolases-like"/>
    <property type="match status" value="1"/>
</dbReference>
<dbReference type="SUPFAM" id="SSF52317">
    <property type="entry name" value="Class I glutamine amidotransferase-like"/>
    <property type="match status" value="1"/>
</dbReference>
<dbReference type="SUPFAM" id="SSF54810">
    <property type="entry name" value="GMP synthetase C-terminal dimerisation domain"/>
    <property type="match status" value="1"/>
</dbReference>
<dbReference type="PROSITE" id="PS51273">
    <property type="entry name" value="GATASE_TYPE_1"/>
    <property type="match status" value="1"/>
</dbReference>
<dbReference type="PROSITE" id="PS51553">
    <property type="entry name" value="GMPS_ATP_PPASE"/>
    <property type="match status" value="1"/>
</dbReference>
<accession>B1JUC0</accession>